<evidence type="ECO:0000250" key="1">
    <source>
        <dbReference type="UniProtKB" id="Q07914"/>
    </source>
</evidence>
<evidence type="ECO:0000250" key="2">
    <source>
        <dbReference type="UniProtKB" id="Q9CQV7"/>
    </source>
</evidence>
<evidence type="ECO:0000255" key="3"/>
<evidence type="ECO:0000255" key="4">
    <source>
        <dbReference type="PROSITE-ProRule" id="PRU00286"/>
    </source>
</evidence>
<evidence type="ECO:0000269" key="5">
    <source>
    </source>
</evidence>
<evidence type="ECO:0000269" key="6">
    <source ref="5"/>
</evidence>
<evidence type="ECO:0000305" key="7"/>
<evidence type="ECO:0000305" key="8">
    <source>
    </source>
</evidence>
<evidence type="ECO:0007744" key="9">
    <source>
    </source>
</evidence>
<evidence type="ECO:0007744" key="10">
    <source>
    </source>
</evidence>
<evidence type="ECO:0007744" key="11">
    <source>
    </source>
</evidence>
<evidence type="ECO:0007744" key="12">
    <source>
    </source>
</evidence>
<organism>
    <name type="scientific">Homo sapiens</name>
    <name type="common">Human</name>
    <dbReference type="NCBI Taxonomy" id="9606"/>
    <lineage>
        <taxon>Eukaryota</taxon>
        <taxon>Metazoa</taxon>
        <taxon>Chordata</taxon>
        <taxon>Craniata</taxon>
        <taxon>Vertebrata</taxon>
        <taxon>Euteleostomi</taxon>
        <taxon>Mammalia</taxon>
        <taxon>Eutheria</taxon>
        <taxon>Euarchontoglires</taxon>
        <taxon>Primates</taxon>
        <taxon>Haplorrhini</taxon>
        <taxon>Catarrhini</taxon>
        <taxon>Hominidae</taxon>
        <taxon>Homo</taxon>
    </lineage>
</organism>
<name>TIM14_HUMAN</name>
<protein>
    <recommendedName>
        <fullName>Mitochondrial import inner membrane translocase subunit TIM14</fullName>
    </recommendedName>
    <alternativeName>
        <fullName>DnaJ homolog subfamily C member 19</fullName>
    </alternativeName>
</protein>
<reference key="1">
    <citation type="journal article" date="2004" name="Nat. Genet.">
        <title>Complete sequencing and characterization of 21,243 full-length human cDNAs.</title>
        <authorList>
            <person name="Ota T."/>
            <person name="Suzuki Y."/>
            <person name="Nishikawa T."/>
            <person name="Otsuki T."/>
            <person name="Sugiyama T."/>
            <person name="Irie R."/>
            <person name="Wakamatsu A."/>
            <person name="Hayashi K."/>
            <person name="Sato H."/>
            <person name="Nagai K."/>
            <person name="Kimura K."/>
            <person name="Makita H."/>
            <person name="Sekine M."/>
            <person name="Obayashi M."/>
            <person name="Nishi T."/>
            <person name="Shibahara T."/>
            <person name="Tanaka T."/>
            <person name="Ishii S."/>
            <person name="Yamamoto J."/>
            <person name="Saito K."/>
            <person name="Kawai Y."/>
            <person name="Isono Y."/>
            <person name="Nakamura Y."/>
            <person name="Nagahari K."/>
            <person name="Murakami K."/>
            <person name="Yasuda T."/>
            <person name="Iwayanagi T."/>
            <person name="Wagatsuma M."/>
            <person name="Shiratori A."/>
            <person name="Sudo H."/>
            <person name="Hosoiri T."/>
            <person name="Kaku Y."/>
            <person name="Kodaira H."/>
            <person name="Kondo H."/>
            <person name="Sugawara M."/>
            <person name="Takahashi M."/>
            <person name="Kanda K."/>
            <person name="Yokoi T."/>
            <person name="Furuya T."/>
            <person name="Kikkawa E."/>
            <person name="Omura Y."/>
            <person name="Abe K."/>
            <person name="Kamihara K."/>
            <person name="Katsuta N."/>
            <person name="Sato K."/>
            <person name="Tanikawa M."/>
            <person name="Yamazaki M."/>
            <person name="Ninomiya K."/>
            <person name="Ishibashi T."/>
            <person name="Yamashita H."/>
            <person name="Murakawa K."/>
            <person name="Fujimori K."/>
            <person name="Tanai H."/>
            <person name="Kimata M."/>
            <person name="Watanabe M."/>
            <person name="Hiraoka S."/>
            <person name="Chiba Y."/>
            <person name="Ishida S."/>
            <person name="Ono Y."/>
            <person name="Takiguchi S."/>
            <person name="Watanabe S."/>
            <person name="Yosida M."/>
            <person name="Hotuta T."/>
            <person name="Kusano J."/>
            <person name="Kanehori K."/>
            <person name="Takahashi-Fujii A."/>
            <person name="Hara H."/>
            <person name="Tanase T.-O."/>
            <person name="Nomura Y."/>
            <person name="Togiya S."/>
            <person name="Komai F."/>
            <person name="Hara R."/>
            <person name="Takeuchi K."/>
            <person name="Arita M."/>
            <person name="Imose N."/>
            <person name="Musashino K."/>
            <person name="Yuuki H."/>
            <person name="Oshima A."/>
            <person name="Sasaki N."/>
            <person name="Aotsuka S."/>
            <person name="Yoshikawa Y."/>
            <person name="Matsunawa H."/>
            <person name="Ichihara T."/>
            <person name="Shiohata N."/>
            <person name="Sano S."/>
            <person name="Moriya S."/>
            <person name="Momiyama H."/>
            <person name="Satoh N."/>
            <person name="Takami S."/>
            <person name="Terashima Y."/>
            <person name="Suzuki O."/>
            <person name="Nakagawa S."/>
            <person name="Senoh A."/>
            <person name="Mizoguchi H."/>
            <person name="Goto Y."/>
            <person name="Shimizu F."/>
            <person name="Wakebe H."/>
            <person name="Hishigaki H."/>
            <person name="Watanabe T."/>
            <person name="Sugiyama A."/>
            <person name="Takemoto M."/>
            <person name="Kawakami B."/>
            <person name="Yamazaki M."/>
            <person name="Watanabe K."/>
            <person name="Kumagai A."/>
            <person name="Itakura S."/>
            <person name="Fukuzumi Y."/>
            <person name="Fujimori Y."/>
            <person name="Komiyama M."/>
            <person name="Tashiro H."/>
            <person name="Tanigami A."/>
            <person name="Fujiwara T."/>
            <person name="Ono T."/>
            <person name="Yamada K."/>
            <person name="Fujii Y."/>
            <person name="Ozaki K."/>
            <person name="Hirao M."/>
            <person name="Ohmori Y."/>
            <person name="Kawabata A."/>
            <person name="Hikiji T."/>
            <person name="Kobatake N."/>
            <person name="Inagaki H."/>
            <person name="Ikema Y."/>
            <person name="Okamoto S."/>
            <person name="Okitani R."/>
            <person name="Kawakami T."/>
            <person name="Noguchi S."/>
            <person name="Itoh T."/>
            <person name="Shigeta K."/>
            <person name="Senba T."/>
            <person name="Matsumura K."/>
            <person name="Nakajima Y."/>
            <person name="Mizuno T."/>
            <person name="Morinaga M."/>
            <person name="Sasaki M."/>
            <person name="Togashi T."/>
            <person name="Oyama M."/>
            <person name="Hata H."/>
            <person name="Watanabe M."/>
            <person name="Komatsu T."/>
            <person name="Mizushima-Sugano J."/>
            <person name="Satoh T."/>
            <person name="Shirai Y."/>
            <person name="Takahashi Y."/>
            <person name="Nakagawa K."/>
            <person name="Okumura K."/>
            <person name="Nagase T."/>
            <person name="Nomura N."/>
            <person name="Kikuchi H."/>
            <person name="Masuho Y."/>
            <person name="Yamashita R."/>
            <person name="Nakai K."/>
            <person name="Yada T."/>
            <person name="Nakamura Y."/>
            <person name="Ohara O."/>
            <person name="Isogai T."/>
            <person name="Sugano S."/>
        </authorList>
    </citation>
    <scope>NUCLEOTIDE SEQUENCE [LARGE SCALE MRNA] (ISOFORM 1)</scope>
    <source>
        <tissue>Thalamus</tissue>
    </source>
</reference>
<reference key="2">
    <citation type="journal article" date="2006" name="Nature">
        <title>The DNA sequence, annotation and analysis of human chromosome 3.</title>
        <authorList>
            <person name="Muzny D.M."/>
            <person name="Scherer S.E."/>
            <person name="Kaul R."/>
            <person name="Wang J."/>
            <person name="Yu J."/>
            <person name="Sudbrak R."/>
            <person name="Buhay C.J."/>
            <person name="Chen R."/>
            <person name="Cree A."/>
            <person name="Ding Y."/>
            <person name="Dugan-Rocha S."/>
            <person name="Gill R."/>
            <person name="Gunaratne P."/>
            <person name="Harris R.A."/>
            <person name="Hawes A.C."/>
            <person name="Hernandez J."/>
            <person name="Hodgson A.V."/>
            <person name="Hume J."/>
            <person name="Jackson A."/>
            <person name="Khan Z.M."/>
            <person name="Kovar-Smith C."/>
            <person name="Lewis L.R."/>
            <person name="Lozado R.J."/>
            <person name="Metzker M.L."/>
            <person name="Milosavljevic A."/>
            <person name="Miner G.R."/>
            <person name="Morgan M.B."/>
            <person name="Nazareth L.V."/>
            <person name="Scott G."/>
            <person name="Sodergren E."/>
            <person name="Song X.-Z."/>
            <person name="Steffen D."/>
            <person name="Wei S."/>
            <person name="Wheeler D.A."/>
            <person name="Wright M.W."/>
            <person name="Worley K.C."/>
            <person name="Yuan Y."/>
            <person name="Zhang Z."/>
            <person name="Adams C.Q."/>
            <person name="Ansari-Lari M.A."/>
            <person name="Ayele M."/>
            <person name="Brown M.J."/>
            <person name="Chen G."/>
            <person name="Chen Z."/>
            <person name="Clendenning J."/>
            <person name="Clerc-Blankenburg K.P."/>
            <person name="Chen R."/>
            <person name="Chen Z."/>
            <person name="Davis C."/>
            <person name="Delgado O."/>
            <person name="Dinh H.H."/>
            <person name="Dong W."/>
            <person name="Draper H."/>
            <person name="Ernst S."/>
            <person name="Fu G."/>
            <person name="Gonzalez-Garay M.L."/>
            <person name="Garcia D.K."/>
            <person name="Gillett W."/>
            <person name="Gu J."/>
            <person name="Hao B."/>
            <person name="Haugen E."/>
            <person name="Havlak P."/>
            <person name="He X."/>
            <person name="Hennig S."/>
            <person name="Hu S."/>
            <person name="Huang W."/>
            <person name="Jackson L.R."/>
            <person name="Jacob L.S."/>
            <person name="Kelly S.H."/>
            <person name="Kube M."/>
            <person name="Levy R."/>
            <person name="Li Z."/>
            <person name="Liu B."/>
            <person name="Liu J."/>
            <person name="Liu W."/>
            <person name="Lu J."/>
            <person name="Maheshwari M."/>
            <person name="Nguyen B.-V."/>
            <person name="Okwuonu G.O."/>
            <person name="Palmeiri A."/>
            <person name="Pasternak S."/>
            <person name="Perez L.M."/>
            <person name="Phelps K.A."/>
            <person name="Plopper F.J."/>
            <person name="Qiang B."/>
            <person name="Raymond C."/>
            <person name="Rodriguez R."/>
            <person name="Saenphimmachak C."/>
            <person name="Santibanez J."/>
            <person name="Shen H."/>
            <person name="Shen Y."/>
            <person name="Subramanian S."/>
            <person name="Tabor P.E."/>
            <person name="Verduzco D."/>
            <person name="Waldron L."/>
            <person name="Wang J."/>
            <person name="Wang J."/>
            <person name="Wang Q."/>
            <person name="Williams G.A."/>
            <person name="Wong G.K.-S."/>
            <person name="Yao Z."/>
            <person name="Zhang J."/>
            <person name="Zhang X."/>
            <person name="Zhao G."/>
            <person name="Zhou J."/>
            <person name="Zhou Y."/>
            <person name="Nelson D."/>
            <person name="Lehrach H."/>
            <person name="Reinhardt R."/>
            <person name="Naylor S.L."/>
            <person name="Yang H."/>
            <person name="Olson M."/>
            <person name="Weinstock G."/>
            <person name="Gibbs R.A."/>
        </authorList>
    </citation>
    <scope>NUCLEOTIDE SEQUENCE [LARGE SCALE GENOMIC DNA]</scope>
</reference>
<reference key="3">
    <citation type="submission" date="2005-09" db="EMBL/GenBank/DDBJ databases">
        <authorList>
            <person name="Mural R.J."/>
            <person name="Istrail S."/>
            <person name="Sutton G.G."/>
            <person name="Florea L."/>
            <person name="Halpern A.L."/>
            <person name="Mobarry C.M."/>
            <person name="Lippert R."/>
            <person name="Walenz B."/>
            <person name="Shatkay H."/>
            <person name="Dew I."/>
            <person name="Miller J.R."/>
            <person name="Flanigan M.J."/>
            <person name="Edwards N.J."/>
            <person name="Bolanos R."/>
            <person name="Fasulo D."/>
            <person name="Halldorsson B.V."/>
            <person name="Hannenhalli S."/>
            <person name="Turner R."/>
            <person name="Yooseph S."/>
            <person name="Lu F."/>
            <person name="Nusskern D.R."/>
            <person name="Shue B.C."/>
            <person name="Zheng X.H."/>
            <person name="Zhong F."/>
            <person name="Delcher A.L."/>
            <person name="Huson D.H."/>
            <person name="Kravitz S.A."/>
            <person name="Mouchard L."/>
            <person name="Reinert K."/>
            <person name="Remington K.A."/>
            <person name="Clark A.G."/>
            <person name="Waterman M.S."/>
            <person name="Eichler E.E."/>
            <person name="Adams M.D."/>
            <person name="Hunkapiller M.W."/>
            <person name="Myers E.W."/>
            <person name="Venter J.C."/>
        </authorList>
    </citation>
    <scope>NUCLEOTIDE SEQUENCE [LARGE SCALE GENOMIC DNA]</scope>
</reference>
<reference key="4">
    <citation type="journal article" date="2004" name="Genome Res.">
        <title>The status, quality, and expansion of the NIH full-length cDNA project: the Mammalian Gene Collection (MGC).</title>
        <authorList>
            <consortium name="The MGC Project Team"/>
        </authorList>
    </citation>
    <scope>NUCLEOTIDE SEQUENCE [LARGE SCALE MRNA] (ISOFORM 1)</scope>
    <source>
        <tissue>Colon</tissue>
        <tissue>Lung</tissue>
    </source>
</reference>
<reference key="5">
    <citation type="submission" date="2005-06" db="UniProtKB">
        <authorList>
            <person name="Bienvenut W.V."/>
        </authorList>
    </citation>
    <scope>PROTEIN SEQUENCE OF 2-20 AND 62-75</scope>
    <scope>CLEAVAGE OF INITIATOR METHIONINE</scope>
    <scope>ACETYLATION AT ALA-2</scope>
    <scope>IDENTIFICATION BY MASS SPECTROMETRY</scope>
    <source>
        <tissue>B-cell lymphoma</tissue>
    </source>
</reference>
<reference key="6">
    <citation type="journal article" date="2003" name="Nat. Biotechnol.">
        <title>Characterization of the human heart mitochondrial proteome.</title>
        <authorList>
            <person name="Taylor S.W."/>
            <person name="Fahy E."/>
            <person name="Zhang B."/>
            <person name="Glenn G.M."/>
            <person name="Warnock D.E."/>
            <person name="Wiley S."/>
            <person name="Murphy A.N."/>
            <person name="Gaucher S.P."/>
            <person name="Capaldi R.A."/>
            <person name="Gibson B.W."/>
            <person name="Ghosh S.S."/>
        </authorList>
    </citation>
    <scope>IDENTIFICATION BY MASS SPECTROMETRY</scope>
    <scope>SUBCELLULAR LOCATION</scope>
</reference>
<reference key="7">
    <citation type="journal article" date="2009" name="Anal. Chem.">
        <title>Lys-N and trypsin cover complementary parts of the phosphoproteome in a refined SCX-based approach.</title>
        <authorList>
            <person name="Gauci S."/>
            <person name="Helbig A.O."/>
            <person name="Slijper M."/>
            <person name="Krijgsveld J."/>
            <person name="Heck A.J."/>
            <person name="Mohammed S."/>
        </authorList>
    </citation>
    <scope>ACETYLATION [LARGE SCALE ANALYSIS] AT ALA-2</scope>
    <scope>CLEAVAGE OF INITIATOR METHIONINE [LARGE SCALE ANALYSIS]</scope>
    <scope>IDENTIFICATION BY MASS SPECTROMETRY [LARGE SCALE ANALYSIS]</scope>
</reference>
<reference key="8">
    <citation type="journal article" date="2010" name="Sci. Signal.">
        <title>Quantitative phosphoproteomics reveals widespread full phosphorylation site occupancy during mitosis.</title>
        <authorList>
            <person name="Olsen J.V."/>
            <person name="Vermeulen M."/>
            <person name="Santamaria A."/>
            <person name="Kumar C."/>
            <person name="Miller M.L."/>
            <person name="Jensen L.J."/>
            <person name="Gnad F."/>
            <person name="Cox J."/>
            <person name="Jensen T.S."/>
            <person name="Nigg E.A."/>
            <person name="Brunak S."/>
            <person name="Mann M."/>
        </authorList>
    </citation>
    <scope>PHOSPHORYLATION [LARGE SCALE ANALYSIS] AT SER-70</scope>
    <scope>IDENTIFICATION BY MASS SPECTROMETRY [LARGE SCALE ANALYSIS]</scope>
    <source>
        <tissue>Cervix carcinoma</tissue>
    </source>
</reference>
<reference key="9">
    <citation type="journal article" date="2011" name="BMC Syst. Biol.">
        <title>Initial characterization of the human central proteome.</title>
        <authorList>
            <person name="Burkard T.R."/>
            <person name="Planyavsky M."/>
            <person name="Kaupe I."/>
            <person name="Breitwieser F.P."/>
            <person name="Buerckstuemmer T."/>
            <person name="Bennett K.L."/>
            <person name="Superti-Furga G."/>
            <person name="Colinge J."/>
        </authorList>
    </citation>
    <scope>IDENTIFICATION BY MASS SPECTROMETRY [LARGE SCALE ANALYSIS]</scope>
</reference>
<reference key="10">
    <citation type="journal article" date="2013" name="J. Proteome Res.">
        <title>Toward a comprehensive characterization of a human cancer cell phosphoproteome.</title>
        <authorList>
            <person name="Zhou H."/>
            <person name="Di Palma S."/>
            <person name="Preisinger C."/>
            <person name="Peng M."/>
            <person name="Polat A.N."/>
            <person name="Heck A.J."/>
            <person name="Mohammed S."/>
        </authorList>
    </citation>
    <scope>PHOSPHORYLATION [LARGE SCALE ANALYSIS] AT SER-39 AND SER-70</scope>
    <scope>IDENTIFICATION BY MASS SPECTROMETRY [LARGE SCALE ANALYSIS]</scope>
    <source>
        <tissue>Cervix carcinoma</tissue>
        <tissue>Erythroleukemia</tissue>
    </source>
</reference>
<reference key="11">
    <citation type="journal article" date="2015" name="Proteomics">
        <title>N-terminome analysis of the human mitochondrial proteome.</title>
        <authorList>
            <person name="Vaca Jacome A.S."/>
            <person name="Rabilloud T."/>
            <person name="Schaeffer-Reiss C."/>
            <person name="Rompais M."/>
            <person name="Ayoub D."/>
            <person name="Lane L."/>
            <person name="Bairoch A."/>
            <person name="Van Dorsselaer A."/>
            <person name="Carapito C."/>
        </authorList>
    </citation>
    <scope>ACETYLATION [LARGE SCALE ANALYSIS] AT ALA-2</scope>
    <scope>CLEAVAGE OF INITIATOR METHIONINE [LARGE SCALE ANALYSIS]</scope>
    <scope>IDENTIFICATION BY MASS SPECTROMETRY [LARGE SCALE ANALYSIS]</scope>
</reference>
<reference key="12">
    <citation type="journal article" date="2006" name="J. Med. Genet.">
        <title>Mutation of DNAJC19, a human homologue of yeast inner mitochondrial membrane co-chaperones, causes DCMA syndrome, a novel autosomal recessive Barth syndrome-like condition.</title>
        <authorList>
            <person name="Davey K.M."/>
            <person name="Parboosingh J.S."/>
            <person name="McLeod D.R."/>
            <person name="Chan A."/>
            <person name="Casey R."/>
            <person name="Ferreira P."/>
            <person name="Snyder F.F."/>
            <person name="Bridge P.J."/>
            <person name="Bernier F.P."/>
        </authorList>
    </citation>
    <scope>INVOLVEMENT IN MGCA5</scope>
</reference>
<feature type="initiator methionine" description="Removed" evidence="6 9 12">
    <location>
        <position position="1"/>
    </location>
</feature>
<feature type="chain" id="PRO_0000071100" description="Mitochondrial import inner membrane translocase subunit TIM14">
    <location>
        <begin position="2"/>
        <end position="116"/>
    </location>
</feature>
<feature type="topological domain" description="Mitochondrial intermembrane" evidence="3">
    <location>
        <begin position="2"/>
        <end position="3"/>
    </location>
</feature>
<feature type="transmembrane region" description="Helical" evidence="3">
    <location>
        <begin position="4"/>
        <end position="24"/>
    </location>
</feature>
<feature type="topological domain" description="Mitochondrial matrix" evidence="3">
    <location>
        <begin position="25"/>
        <end position="116"/>
    </location>
</feature>
<feature type="domain" description="J" evidence="4">
    <location>
        <begin position="62"/>
        <end position="116"/>
    </location>
</feature>
<feature type="modified residue" description="N-acetylalanine" evidence="6 9 12">
    <location>
        <position position="2"/>
    </location>
</feature>
<feature type="modified residue" description="Phosphoserine" evidence="11">
    <location>
        <position position="39"/>
    </location>
</feature>
<feature type="modified residue" description="Phosphoserine" evidence="10 11">
    <location>
        <position position="70"/>
    </location>
</feature>
<feature type="splice variant" id="VSP_047119" description="In isoform 2." evidence="7">
    <location>
        <begin position="1"/>
        <end position="25"/>
    </location>
</feature>
<proteinExistence type="evidence at protein level"/>
<keyword id="KW-0007">Acetylation</keyword>
<keyword id="KW-0025">Alternative splicing</keyword>
<keyword id="KW-0122">Cardiomyopathy</keyword>
<keyword id="KW-0143">Chaperone</keyword>
<keyword id="KW-0903">Direct protein sequencing</keyword>
<keyword id="KW-0472">Membrane</keyword>
<keyword id="KW-0496">Mitochondrion</keyword>
<keyword id="KW-0999">Mitochondrion inner membrane</keyword>
<keyword id="KW-0597">Phosphoprotein</keyword>
<keyword id="KW-0653">Protein transport</keyword>
<keyword id="KW-1267">Proteomics identification</keyword>
<keyword id="KW-1185">Reference proteome</keyword>
<keyword id="KW-0811">Translocation</keyword>
<keyword id="KW-0812">Transmembrane</keyword>
<keyword id="KW-1133">Transmembrane helix</keyword>
<keyword id="KW-0813">Transport</keyword>
<sequence length="116" mass="12499">MASTVVAVGLTIAAAGFAGRYVLQAMKHMEPQVKQVFQSLPKSAFSGGYYRGGFEPKMTKREAALILGVSPTANKGKIRDAHRRIMLLNHPDKGGSPYIAAKINEAKDLLEGQAKK</sequence>
<gene>
    <name type="primary">DNAJC19</name>
    <name type="synonym">TIM14</name>
    <name type="synonym">TIMM14</name>
</gene>
<dbReference type="EMBL" id="AK311765">
    <property type="protein sequence ID" value="BAG34708.1"/>
    <property type="molecule type" value="mRNA"/>
</dbReference>
<dbReference type="EMBL" id="AC008009">
    <property type="status" value="NOT_ANNOTATED_CDS"/>
    <property type="molecule type" value="Genomic_DNA"/>
</dbReference>
<dbReference type="EMBL" id="CH471052">
    <property type="protein sequence ID" value="EAW78358.1"/>
    <property type="molecule type" value="Genomic_DNA"/>
</dbReference>
<dbReference type="EMBL" id="CH471052">
    <property type="protein sequence ID" value="EAW78360.1"/>
    <property type="molecule type" value="Genomic_DNA"/>
</dbReference>
<dbReference type="EMBL" id="CH471052">
    <property type="protein sequence ID" value="EAW78362.1"/>
    <property type="molecule type" value="Genomic_DNA"/>
</dbReference>
<dbReference type="EMBL" id="BC073989">
    <property type="protein sequence ID" value="AAH73989.1"/>
    <property type="molecule type" value="mRNA"/>
</dbReference>
<dbReference type="EMBL" id="BC009702">
    <property type="protein sequence ID" value="AAH09702.1"/>
    <property type="molecule type" value="mRNA"/>
</dbReference>
<dbReference type="CCDS" id="CCDS33895.1">
    <molecule id="Q96DA6-1"/>
</dbReference>
<dbReference type="CCDS" id="CCDS54684.1">
    <molecule id="Q96DA6-2"/>
</dbReference>
<dbReference type="RefSeq" id="NP_001177162.1">
    <molecule id="Q96DA6-2"/>
    <property type="nucleotide sequence ID" value="NM_001190233.2"/>
</dbReference>
<dbReference type="RefSeq" id="NP_660304.1">
    <molecule id="Q96DA6-1"/>
    <property type="nucleotide sequence ID" value="NM_145261.4"/>
</dbReference>
<dbReference type="SMR" id="Q96DA6"/>
<dbReference type="BioGRID" id="126272">
    <property type="interactions" value="205"/>
</dbReference>
<dbReference type="ComplexPortal" id="CPX-6129">
    <property type="entry name" value="TIM23 mitochondrial inner membrane pre-sequence translocase complex, TIM17A variant"/>
</dbReference>
<dbReference type="ComplexPortal" id="CPX-6130">
    <property type="entry name" value="TIM23 mitochondrial inner membrane pre-sequence translocase complex, TIM17B variant"/>
</dbReference>
<dbReference type="CORUM" id="Q96DA6"/>
<dbReference type="DIP" id="DIP-62091N"/>
<dbReference type="FunCoup" id="Q96DA6">
    <property type="interactions" value="1868"/>
</dbReference>
<dbReference type="IntAct" id="Q96DA6">
    <property type="interactions" value="42"/>
</dbReference>
<dbReference type="MINT" id="Q96DA6"/>
<dbReference type="STRING" id="9606.ENSP00000372005"/>
<dbReference type="iPTMnet" id="Q96DA6"/>
<dbReference type="PhosphoSitePlus" id="Q96DA6"/>
<dbReference type="BioMuta" id="DNAJC19"/>
<dbReference type="DMDM" id="74760780"/>
<dbReference type="jPOST" id="Q96DA6"/>
<dbReference type="MassIVE" id="Q96DA6"/>
<dbReference type="PaxDb" id="9606-ENSP00000372005"/>
<dbReference type="PeptideAtlas" id="Q96DA6"/>
<dbReference type="ProteomicsDB" id="76265">
    <molecule id="Q96DA6-1"/>
</dbReference>
<dbReference type="ProteomicsDB" id="9509"/>
<dbReference type="Pumba" id="Q96DA6"/>
<dbReference type="TopDownProteomics" id="Q96DA6-1">
    <molecule id="Q96DA6-1"/>
</dbReference>
<dbReference type="Antibodypedia" id="33761">
    <property type="antibodies" value="170 antibodies from 27 providers"/>
</dbReference>
<dbReference type="DNASU" id="131118"/>
<dbReference type="Ensembl" id="ENST00000382564.8">
    <molecule id="Q96DA6-1"/>
    <property type="protein sequence ID" value="ENSP00000372005.2"/>
    <property type="gene ID" value="ENSG00000205981.9"/>
</dbReference>
<dbReference type="Ensembl" id="ENST00000479269.5">
    <molecule id="Q96DA6-2"/>
    <property type="protein sequence ID" value="ENSP00000419191.1"/>
    <property type="gene ID" value="ENSG00000205981.9"/>
</dbReference>
<dbReference type="Ensembl" id="ENST00000491873.5">
    <molecule id="Q96DA6-2"/>
    <property type="protein sequence ID" value="ENSP00000420767.1"/>
    <property type="gene ID" value="ENSG00000205981.9"/>
</dbReference>
<dbReference type="GeneID" id="131118"/>
<dbReference type="KEGG" id="hsa:131118"/>
<dbReference type="MANE-Select" id="ENST00000382564.8">
    <property type="protein sequence ID" value="ENSP00000372005.2"/>
    <property type="RefSeq nucleotide sequence ID" value="NM_145261.4"/>
    <property type="RefSeq protein sequence ID" value="NP_660304.1"/>
</dbReference>
<dbReference type="UCSC" id="uc003fkt.4">
    <molecule id="Q96DA6-1"/>
    <property type="organism name" value="human"/>
</dbReference>
<dbReference type="AGR" id="HGNC:30528"/>
<dbReference type="CTD" id="131118"/>
<dbReference type="DisGeNET" id="131118"/>
<dbReference type="GeneCards" id="DNAJC19"/>
<dbReference type="HGNC" id="HGNC:30528">
    <property type="gene designation" value="DNAJC19"/>
</dbReference>
<dbReference type="HPA" id="ENSG00000205981">
    <property type="expression patterns" value="Low tissue specificity"/>
</dbReference>
<dbReference type="MalaCards" id="DNAJC19"/>
<dbReference type="MIM" id="608977">
    <property type="type" value="gene"/>
</dbReference>
<dbReference type="MIM" id="610198">
    <property type="type" value="phenotype"/>
</dbReference>
<dbReference type="neXtProt" id="NX_Q96DA6"/>
<dbReference type="OpenTargets" id="ENSG00000205981"/>
<dbReference type="Orphanet" id="66634">
    <property type="disease" value="Dilated cardiomyopathy with ataxia"/>
</dbReference>
<dbReference type="PharmGKB" id="PA142671967"/>
<dbReference type="VEuPathDB" id="HostDB:ENSG00000205981"/>
<dbReference type="eggNOG" id="KOG0723">
    <property type="taxonomic scope" value="Eukaryota"/>
</dbReference>
<dbReference type="GeneTree" id="ENSGT00940000154384"/>
<dbReference type="HOGENOM" id="CLU_017633_13_3_1"/>
<dbReference type="InParanoid" id="Q96DA6"/>
<dbReference type="OMA" id="RYLIHAW"/>
<dbReference type="OrthoDB" id="240298at2759"/>
<dbReference type="PAN-GO" id="Q96DA6">
    <property type="GO annotations" value="3 GO annotations based on evolutionary models"/>
</dbReference>
<dbReference type="PhylomeDB" id="Q96DA6"/>
<dbReference type="TreeFam" id="TF320584"/>
<dbReference type="PathwayCommons" id="Q96DA6"/>
<dbReference type="Reactome" id="R-HSA-1268020">
    <property type="pathway name" value="Mitochondrial protein import"/>
</dbReference>
<dbReference type="SignaLink" id="Q96DA6"/>
<dbReference type="SIGNOR" id="Q96DA6"/>
<dbReference type="BioGRID-ORCS" id="131118">
    <property type="hits" value="147 hits in 1122 CRISPR screens"/>
</dbReference>
<dbReference type="CD-CODE" id="FB4E32DD">
    <property type="entry name" value="Presynaptic clusters and postsynaptic densities"/>
</dbReference>
<dbReference type="ChiTaRS" id="DNAJC19">
    <property type="organism name" value="human"/>
</dbReference>
<dbReference type="GeneWiki" id="DNAJC19"/>
<dbReference type="GenomeRNAi" id="131118"/>
<dbReference type="Pharos" id="Q96DA6">
    <property type="development level" value="Tbio"/>
</dbReference>
<dbReference type="PRO" id="PR:Q96DA6"/>
<dbReference type="Proteomes" id="UP000005640">
    <property type="component" value="Chromosome 3"/>
</dbReference>
<dbReference type="RNAct" id="Q96DA6">
    <property type="molecule type" value="protein"/>
</dbReference>
<dbReference type="Bgee" id="ENSG00000205981">
    <property type="expression patterns" value="Expressed in tendon of biceps brachii and 181 other cell types or tissues"/>
</dbReference>
<dbReference type="ExpressionAtlas" id="Q96DA6">
    <property type="expression patterns" value="baseline and differential"/>
</dbReference>
<dbReference type="GO" id="GO:0098800">
    <property type="term" value="C:inner mitochondrial membrane protein complex"/>
    <property type="evidence" value="ECO:0000250"/>
    <property type="project" value="UniProtKB"/>
</dbReference>
<dbReference type="GO" id="GO:0099617">
    <property type="term" value="C:matrix side of mitochondrial inner membrane"/>
    <property type="evidence" value="ECO:0000250"/>
    <property type="project" value="UniProtKB"/>
</dbReference>
<dbReference type="GO" id="GO:0016020">
    <property type="term" value="C:membrane"/>
    <property type="evidence" value="ECO:0000303"/>
    <property type="project" value="UniProtKB"/>
</dbReference>
<dbReference type="GO" id="GO:0005743">
    <property type="term" value="C:mitochondrial inner membrane"/>
    <property type="evidence" value="ECO:0000314"/>
    <property type="project" value="GO_Central"/>
</dbReference>
<dbReference type="GO" id="GO:0005739">
    <property type="term" value="C:mitochondrion"/>
    <property type="evidence" value="ECO:0000314"/>
    <property type="project" value="UniProtKB"/>
</dbReference>
<dbReference type="GO" id="GO:0001405">
    <property type="term" value="C:PAM complex, Tim23 associated import motor"/>
    <property type="evidence" value="ECO:0000318"/>
    <property type="project" value="GO_Central"/>
</dbReference>
<dbReference type="GO" id="GO:0032991">
    <property type="term" value="C:protein-containing complex"/>
    <property type="evidence" value="ECO:0000314"/>
    <property type="project" value="GO_Central"/>
</dbReference>
<dbReference type="GO" id="GO:0005744">
    <property type="term" value="C:TIM23 mitochondrial import inner membrane translocase complex"/>
    <property type="evidence" value="ECO:0000303"/>
    <property type="project" value="ComplexPortal"/>
</dbReference>
<dbReference type="GO" id="GO:0001671">
    <property type="term" value="F:ATPase activator activity"/>
    <property type="evidence" value="ECO:0000318"/>
    <property type="project" value="GO_Central"/>
</dbReference>
<dbReference type="GO" id="GO:0048806">
    <property type="term" value="P:genitalia development"/>
    <property type="evidence" value="ECO:0000315"/>
    <property type="project" value="UniProtKB"/>
</dbReference>
<dbReference type="GO" id="GO:0006886">
    <property type="term" value="P:intracellular protein transport"/>
    <property type="evidence" value="ECO:0000303"/>
    <property type="project" value="ComplexPortal"/>
</dbReference>
<dbReference type="GO" id="GO:0006457">
    <property type="term" value="P:protein folding"/>
    <property type="evidence" value="ECO:0000303"/>
    <property type="project" value="UniProtKB"/>
</dbReference>
<dbReference type="GO" id="GO:0030150">
    <property type="term" value="P:protein import into mitochondrial matrix"/>
    <property type="evidence" value="ECO:0000318"/>
    <property type="project" value="GO_Central"/>
</dbReference>
<dbReference type="GO" id="GO:0006626">
    <property type="term" value="P:protein targeting to mitochondrion"/>
    <property type="evidence" value="ECO:0000303"/>
    <property type="project" value="UniProtKB"/>
</dbReference>
<dbReference type="GO" id="GO:1900208">
    <property type="term" value="P:regulation of cardiolipin metabolic process"/>
    <property type="evidence" value="ECO:0000250"/>
    <property type="project" value="UniProtKB"/>
</dbReference>
<dbReference type="GO" id="GO:0007601">
    <property type="term" value="P:visual perception"/>
    <property type="evidence" value="ECO:0000315"/>
    <property type="project" value="UniProtKB"/>
</dbReference>
<dbReference type="CDD" id="cd06257">
    <property type="entry name" value="DnaJ"/>
    <property type="match status" value="1"/>
</dbReference>
<dbReference type="FunFam" id="1.10.287.110:FF:000001">
    <property type="entry name" value="Import inner membrane translocase subunit tim14"/>
    <property type="match status" value="1"/>
</dbReference>
<dbReference type="Gene3D" id="1.10.287.110">
    <property type="entry name" value="DnaJ domain"/>
    <property type="match status" value="1"/>
</dbReference>
<dbReference type="InterPro" id="IPR001623">
    <property type="entry name" value="DnaJ_domain"/>
</dbReference>
<dbReference type="InterPro" id="IPR036869">
    <property type="entry name" value="J_dom_sf"/>
</dbReference>
<dbReference type="PANTHER" id="PTHR12763">
    <property type="match status" value="1"/>
</dbReference>
<dbReference type="PANTHER" id="PTHR12763:SF56">
    <property type="entry name" value="MITOCHONDRIAL IMPORT INNER MEMBRANE TRANSLOCASE SUBUNIT TIM14"/>
    <property type="match status" value="1"/>
</dbReference>
<dbReference type="Pfam" id="PF00226">
    <property type="entry name" value="DnaJ"/>
    <property type="match status" value="1"/>
</dbReference>
<dbReference type="SMART" id="SM00271">
    <property type="entry name" value="DnaJ"/>
    <property type="match status" value="1"/>
</dbReference>
<dbReference type="SUPFAM" id="SSF46565">
    <property type="entry name" value="Chaperone J-domain"/>
    <property type="match status" value="1"/>
</dbReference>
<dbReference type="PROSITE" id="PS50076">
    <property type="entry name" value="DNAJ_2"/>
    <property type="match status" value="1"/>
</dbReference>
<comment type="function">
    <text evidence="1 2">Mitochondrial co-chaperone which forms a complex with prohibitins to regulate cardiolipin remodeling (By similarity). May be a component of the PAM complex, a complex required for the translocation of transit peptide-containing proteins from the inner membrane into the mitochondrial matrix in an ATP-dependent manner. May act as a co-chaperone that stimulate the ATP-dependent activity (By similarity).</text>
</comment>
<comment type="subunit">
    <text evidence="1 2">Interacts with PHB2; the interaction associates DNAJC19 with the prohibitin complex. Interacts with TIMM16/PAM16 (By similarity). May be a component of the PAM complex at least composed of a mitochondrial HSP70 protein, GRPEL1 or GRPEL2, TIMM44, TIMM16/PAM16 and TIMM14/DNAJC19 (By similarity).</text>
</comment>
<comment type="subcellular location">
    <subcellularLocation>
        <location evidence="8">Mitochondrion inner membrane</location>
        <topology evidence="8">Single-pass membrane protein</topology>
        <orientation evidence="2">Matrix side</orientation>
    </subcellularLocation>
</comment>
<comment type="alternative products">
    <event type="alternative splicing"/>
    <isoform>
        <id>Q96DA6-1</id>
        <name>1</name>
        <sequence type="displayed"/>
    </isoform>
    <isoform>
        <id>Q96DA6-2</id>
        <name>2</name>
        <sequence type="described" ref="VSP_047119"/>
    </isoform>
</comment>
<comment type="tissue specificity">
    <text>Ubiquitously expressed.</text>
</comment>
<comment type="disease" evidence="5">
    <disease id="DI-00007">
        <name>3-methylglutaconic aciduria 5</name>
        <acronym>MGCA5</acronym>
        <description>An autosomal recessive disorder characterized by early-onset dilated cardiomyopathy, growth failure, cerebellar ataxia causing significant motor delays, testicular dysgenesis, growth failure and significant increases in urine organic acids, particularly 3-methylglutaconic acid and 3-methylglutaric acid.</description>
        <dbReference type="MIM" id="610198"/>
    </disease>
    <text>The disease is caused by variants affecting the gene represented in this entry.</text>
</comment>
<comment type="similarity">
    <text evidence="7">Belongs to the TIM14 family.</text>
</comment>
<accession>Q96DA6</accession>
<accession>B2R4B1</accession>
<accession>C9JBV1</accession>